<dbReference type="EC" id="5.1.1.7" evidence="1"/>
<dbReference type="EMBL" id="BX897699">
    <property type="protein sequence ID" value="CAF28421.1"/>
    <property type="molecule type" value="Genomic_DNA"/>
</dbReference>
<dbReference type="RefSeq" id="WP_011181420.1">
    <property type="nucleotide sequence ID" value="NZ_LRIJ02000001.1"/>
</dbReference>
<dbReference type="SMR" id="Q6G1L7"/>
<dbReference type="PaxDb" id="283166-BH16600"/>
<dbReference type="EnsemblBacteria" id="CAF28421">
    <property type="protein sequence ID" value="CAF28421"/>
    <property type="gene ID" value="BH16600"/>
</dbReference>
<dbReference type="GeneID" id="92986279"/>
<dbReference type="KEGG" id="bhe:BH16600"/>
<dbReference type="eggNOG" id="COG0253">
    <property type="taxonomic scope" value="Bacteria"/>
</dbReference>
<dbReference type="OrthoDB" id="9805408at2"/>
<dbReference type="UniPathway" id="UPA00034">
    <property type="reaction ID" value="UER00025"/>
</dbReference>
<dbReference type="Proteomes" id="UP000000421">
    <property type="component" value="Chromosome"/>
</dbReference>
<dbReference type="GO" id="GO:0005829">
    <property type="term" value="C:cytosol"/>
    <property type="evidence" value="ECO:0007669"/>
    <property type="project" value="TreeGrafter"/>
</dbReference>
<dbReference type="GO" id="GO:0008837">
    <property type="term" value="F:diaminopimelate epimerase activity"/>
    <property type="evidence" value="ECO:0007669"/>
    <property type="project" value="UniProtKB-UniRule"/>
</dbReference>
<dbReference type="GO" id="GO:0009089">
    <property type="term" value="P:lysine biosynthetic process via diaminopimelate"/>
    <property type="evidence" value="ECO:0007669"/>
    <property type="project" value="UniProtKB-UniRule"/>
</dbReference>
<dbReference type="Gene3D" id="3.10.310.10">
    <property type="entry name" value="Diaminopimelate Epimerase, Chain A, domain 1"/>
    <property type="match status" value="2"/>
</dbReference>
<dbReference type="HAMAP" id="MF_00197">
    <property type="entry name" value="DAP_epimerase"/>
    <property type="match status" value="1"/>
</dbReference>
<dbReference type="InterPro" id="IPR018510">
    <property type="entry name" value="DAP_epimerase_AS"/>
</dbReference>
<dbReference type="InterPro" id="IPR001653">
    <property type="entry name" value="DAP_epimerase_DapF"/>
</dbReference>
<dbReference type="NCBIfam" id="TIGR00652">
    <property type="entry name" value="DapF"/>
    <property type="match status" value="1"/>
</dbReference>
<dbReference type="PANTHER" id="PTHR31689:SF0">
    <property type="entry name" value="DIAMINOPIMELATE EPIMERASE"/>
    <property type="match status" value="1"/>
</dbReference>
<dbReference type="PANTHER" id="PTHR31689">
    <property type="entry name" value="DIAMINOPIMELATE EPIMERASE, CHLOROPLASTIC"/>
    <property type="match status" value="1"/>
</dbReference>
<dbReference type="Pfam" id="PF01678">
    <property type="entry name" value="DAP_epimerase"/>
    <property type="match status" value="2"/>
</dbReference>
<dbReference type="SUPFAM" id="SSF54506">
    <property type="entry name" value="Diaminopimelate epimerase-like"/>
    <property type="match status" value="2"/>
</dbReference>
<dbReference type="PROSITE" id="PS01326">
    <property type="entry name" value="DAP_EPIMERASE"/>
    <property type="match status" value="1"/>
</dbReference>
<sequence length="283" mass="31224">MKTPFSKMDGLGNQIIVADMRESTHALTPQAILSLAADSQTYFDQIMAIHLPTKKEADFRIEIWNADGSMANACGNGTRCVIAWLTDHNYGEIFRLETPAGIVEGKRQIDNLISVDMGCPNFNAKEMPVSREIIDTNHVELTAGPLRDACLVSIGNLHAIFFVENDIQYIPLEKYGSKLEHDPLFPQRCNISIACVTSQESLNLRTWERGAGLTQACGSAACASAVAAYRRGLTKRNIDVNLPGGTLNIFYREDDHIIMTGPVKYGFSGFLNPLTGSYKKDDF</sequence>
<comment type="function">
    <text evidence="1">Catalyzes the stereoinversion of LL-2,6-diaminopimelate (L,L-DAP) to meso-diaminopimelate (meso-DAP), a precursor of L-lysine and an essential component of the bacterial peptidoglycan.</text>
</comment>
<comment type="catalytic activity">
    <reaction evidence="1">
        <text>(2S,6S)-2,6-diaminopimelate = meso-2,6-diaminopimelate</text>
        <dbReference type="Rhea" id="RHEA:15393"/>
        <dbReference type="ChEBI" id="CHEBI:57609"/>
        <dbReference type="ChEBI" id="CHEBI:57791"/>
        <dbReference type="EC" id="5.1.1.7"/>
    </reaction>
</comment>
<comment type="pathway">
    <text evidence="1">Amino-acid biosynthesis; L-lysine biosynthesis via DAP pathway; DL-2,6-diaminopimelate from LL-2,6-diaminopimelate: step 1/1.</text>
</comment>
<comment type="subunit">
    <text evidence="1">Homodimer.</text>
</comment>
<comment type="subcellular location">
    <subcellularLocation>
        <location evidence="1">Cytoplasm</location>
    </subcellularLocation>
</comment>
<comment type="similarity">
    <text evidence="1">Belongs to the diaminopimelate epimerase family.</text>
</comment>
<evidence type="ECO:0000255" key="1">
    <source>
        <dbReference type="HAMAP-Rule" id="MF_00197"/>
    </source>
</evidence>
<name>DAPF_BARHE</name>
<protein>
    <recommendedName>
        <fullName evidence="1">Diaminopimelate epimerase</fullName>
        <shortName evidence="1">DAP epimerase</shortName>
        <ecNumber evidence="1">5.1.1.7</ecNumber>
    </recommendedName>
    <alternativeName>
        <fullName evidence="1">PLP-independent amino acid racemase</fullName>
    </alternativeName>
</protein>
<organism>
    <name type="scientific">Bartonella henselae (strain ATCC 49882 / DSM 28221 / CCUG 30454 / Houston 1)</name>
    <name type="common">Rochalimaea henselae</name>
    <dbReference type="NCBI Taxonomy" id="283166"/>
    <lineage>
        <taxon>Bacteria</taxon>
        <taxon>Pseudomonadati</taxon>
        <taxon>Pseudomonadota</taxon>
        <taxon>Alphaproteobacteria</taxon>
        <taxon>Hyphomicrobiales</taxon>
        <taxon>Bartonellaceae</taxon>
        <taxon>Bartonella</taxon>
    </lineage>
</organism>
<keyword id="KW-0028">Amino-acid biosynthesis</keyword>
<keyword id="KW-0963">Cytoplasm</keyword>
<keyword id="KW-0413">Isomerase</keyword>
<keyword id="KW-0457">Lysine biosynthesis</keyword>
<proteinExistence type="inferred from homology"/>
<accession>Q6G1L7</accession>
<reference key="1">
    <citation type="journal article" date="2004" name="Proc. Natl. Acad. Sci. U.S.A.">
        <title>The louse-borne human pathogen Bartonella quintana is a genomic derivative of the zoonotic agent Bartonella henselae.</title>
        <authorList>
            <person name="Alsmark U.C.M."/>
            <person name="Frank A.C."/>
            <person name="Karlberg E.O."/>
            <person name="Legault B.-A."/>
            <person name="Ardell D.H."/>
            <person name="Canbaeck B."/>
            <person name="Eriksson A.-S."/>
            <person name="Naeslund A.K."/>
            <person name="Handley S.A."/>
            <person name="Huvet M."/>
            <person name="La Scola B."/>
            <person name="Holmberg M."/>
            <person name="Andersson S.G.E."/>
        </authorList>
    </citation>
    <scope>NUCLEOTIDE SEQUENCE [LARGE SCALE GENOMIC DNA]</scope>
    <source>
        <strain>ATCC 49882 / DSM 28221 / CCUG 30454 / Houston 1</strain>
    </source>
</reference>
<gene>
    <name evidence="1" type="primary">dapF</name>
    <name type="ordered locus">BH16600</name>
</gene>
<feature type="chain" id="PRO_1000011846" description="Diaminopimelate epimerase">
    <location>
        <begin position="1"/>
        <end position="283"/>
    </location>
</feature>
<feature type="active site" description="Proton donor" evidence="1">
    <location>
        <position position="74"/>
    </location>
</feature>
<feature type="active site" description="Proton acceptor" evidence="1">
    <location>
        <position position="217"/>
    </location>
</feature>
<feature type="binding site" evidence="1">
    <location>
        <position position="13"/>
    </location>
    <ligand>
        <name>substrate</name>
    </ligand>
</feature>
<feature type="binding site" evidence="1">
    <location>
        <position position="45"/>
    </location>
    <ligand>
        <name>substrate</name>
    </ligand>
</feature>
<feature type="binding site" evidence="1">
    <location>
        <position position="65"/>
    </location>
    <ligand>
        <name>substrate</name>
    </ligand>
</feature>
<feature type="binding site" evidence="1">
    <location>
        <begin position="75"/>
        <end position="76"/>
    </location>
    <ligand>
        <name>substrate</name>
    </ligand>
</feature>
<feature type="binding site" evidence="1">
    <location>
        <position position="156"/>
    </location>
    <ligand>
        <name>substrate</name>
    </ligand>
</feature>
<feature type="binding site" evidence="1">
    <location>
        <position position="190"/>
    </location>
    <ligand>
        <name>substrate</name>
    </ligand>
</feature>
<feature type="binding site" evidence="1">
    <location>
        <begin position="208"/>
        <end position="209"/>
    </location>
    <ligand>
        <name>substrate</name>
    </ligand>
</feature>
<feature type="binding site" evidence="1">
    <location>
        <begin position="218"/>
        <end position="219"/>
    </location>
    <ligand>
        <name>substrate</name>
    </ligand>
</feature>
<feature type="site" description="Could be important to modulate the pK values of the two catalytic cysteine residues" evidence="1">
    <location>
        <position position="158"/>
    </location>
</feature>
<feature type="site" description="Could be important to modulate the pK values of the two catalytic cysteine residues" evidence="1">
    <location>
        <position position="208"/>
    </location>
</feature>